<dbReference type="EC" id="5.6.1.7" evidence="1"/>
<dbReference type="EMBL" id="M20482">
    <property type="protein sequence ID" value="AAA23309.1"/>
    <property type="molecule type" value="Genomic_DNA"/>
</dbReference>
<dbReference type="EMBL" id="AE016828">
    <property type="protein sequence ID" value="AAO91213.1"/>
    <property type="molecule type" value="Genomic_DNA"/>
</dbReference>
<dbReference type="PIR" id="S39765">
    <property type="entry name" value="S39765"/>
</dbReference>
<dbReference type="RefSeq" id="NP_820699.1">
    <property type="nucleotide sequence ID" value="NC_002971.4"/>
</dbReference>
<dbReference type="RefSeq" id="WP_005770500.1">
    <property type="nucleotide sequence ID" value="NZ_CDBG01000001.1"/>
</dbReference>
<dbReference type="SMR" id="P19421"/>
<dbReference type="STRING" id="227377.CBU_1718"/>
<dbReference type="EnsemblBacteria" id="AAO91213">
    <property type="protein sequence ID" value="AAO91213"/>
    <property type="gene ID" value="CBU_1718"/>
</dbReference>
<dbReference type="GeneID" id="1209629"/>
<dbReference type="KEGG" id="cbu:CBU_1718"/>
<dbReference type="PATRIC" id="fig|227377.7.peg.1703"/>
<dbReference type="eggNOG" id="COG0459">
    <property type="taxonomic scope" value="Bacteria"/>
</dbReference>
<dbReference type="HOGENOM" id="CLU_016503_3_0_6"/>
<dbReference type="OrthoDB" id="9766614at2"/>
<dbReference type="Proteomes" id="UP000002671">
    <property type="component" value="Chromosome"/>
</dbReference>
<dbReference type="GO" id="GO:1990220">
    <property type="term" value="C:GroEL-GroES complex"/>
    <property type="evidence" value="ECO:0000318"/>
    <property type="project" value="GO_Central"/>
</dbReference>
<dbReference type="GO" id="GO:0005524">
    <property type="term" value="F:ATP binding"/>
    <property type="evidence" value="ECO:0000318"/>
    <property type="project" value="GO_Central"/>
</dbReference>
<dbReference type="GO" id="GO:0140662">
    <property type="term" value="F:ATP-dependent protein folding chaperone"/>
    <property type="evidence" value="ECO:0007669"/>
    <property type="project" value="InterPro"/>
</dbReference>
<dbReference type="GO" id="GO:0016853">
    <property type="term" value="F:isomerase activity"/>
    <property type="evidence" value="ECO:0007669"/>
    <property type="project" value="UniProtKB-KW"/>
</dbReference>
<dbReference type="GO" id="GO:0051082">
    <property type="term" value="F:unfolded protein binding"/>
    <property type="evidence" value="ECO:0000318"/>
    <property type="project" value="GO_Central"/>
</dbReference>
<dbReference type="GO" id="GO:0051085">
    <property type="term" value="P:chaperone cofactor-dependent protein refolding"/>
    <property type="evidence" value="ECO:0000318"/>
    <property type="project" value="GO_Central"/>
</dbReference>
<dbReference type="GO" id="GO:0042026">
    <property type="term" value="P:protein refolding"/>
    <property type="evidence" value="ECO:0007669"/>
    <property type="project" value="UniProtKB-UniRule"/>
</dbReference>
<dbReference type="GO" id="GO:0009408">
    <property type="term" value="P:response to heat"/>
    <property type="evidence" value="ECO:0000318"/>
    <property type="project" value="GO_Central"/>
</dbReference>
<dbReference type="CDD" id="cd03344">
    <property type="entry name" value="GroEL"/>
    <property type="match status" value="1"/>
</dbReference>
<dbReference type="FunFam" id="1.10.560.10:FF:000001">
    <property type="entry name" value="60 kDa chaperonin"/>
    <property type="match status" value="1"/>
</dbReference>
<dbReference type="FunFam" id="3.50.7.10:FF:000001">
    <property type="entry name" value="60 kDa chaperonin"/>
    <property type="match status" value="1"/>
</dbReference>
<dbReference type="Gene3D" id="3.50.7.10">
    <property type="entry name" value="GroEL"/>
    <property type="match status" value="1"/>
</dbReference>
<dbReference type="Gene3D" id="1.10.560.10">
    <property type="entry name" value="GroEL-like equatorial domain"/>
    <property type="match status" value="1"/>
</dbReference>
<dbReference type="Gene3D" id="3.30.260.10">
    <property type="entry name" value="TCP-1-like chaperonin intermediate domain"/>
    <property type="match status" value="1"/>
</dbReference>
<dbReference type="HAMAP" id="MF_00600">
    <property type="entry name" value="CH60"/>
    <property type="match status" value="1"/>
</dbReference>
<dbReference type="InterPro" id="IPR018370">
    <property type="entry name" value="Chaperonin_Cpn60_CS"/>
</dbReference>
<dbReference type="InterPro" id="IPR001844">
    <property type="entry name" value="Cpn60/GroEL"/>
</dbReference>
<dbReference type="InterPro" id="IPR002423">
    <property type="entry name" value="Cpn60/GroEL/TCP-1"/>
</dbReference>
<dbReference type="InterPro" id="IPR027409">
    <property type="entry name" value="GroEL-like_apical_dom_sf"/>
</dbReference>
<dbReference type="InterPro" id="IPR027413">
    <property type="entry name" value="GROEL-like_equatorial_sf"/>
</dbReference>
<dbReference type="InterPro" id="IPR027410">
    <property type="entry name" value="TCP-1-like_intermed_sf"/>
</dbReference>
<dbReference type="NCBIfam" id="TIGR02348">
    <property type="entry name" value="GroEL"/>
    <property type="match status" value="1"/>
</dbReference>
<dbReference type="NCBIfam" id="NF000592">
    <property type="entry name" value="PRK00013.1"/>
    <property type="match status" value="1"/>
</dbReference>
<dbReference type="NCBIfam" id="NF009487">
    <property type="entry name" value="PRK12849.1"/>
    <property type="match status" value="1"/>
</dbReference>
<dbReference type="NCBIfam" id="NF009488">
    <property type="entry name" value="PRK12850.1"/>
    <property type="match status" value="1"/>
</dbReference>
<dbReference type="NCBIfam" id="NF009489">
    <property type="entry name" value="PRK12851.1"/>
    <property type="match status" value="1"/>
</dbReference>
<dbReference type="PANTHER" id="PTHR45633">
    <property type="entry name" value="60 KDA HEAT SHOCK PROTEIN, MITOCHONDRIAL"/>
    <property type="match status" value="1"/>
</dbReference>
<dbReference type="Pfam" id="PF00118">
    <property type="entry name" value="Cpn60_TCP1"/>
    <property type="match status" value="1"/>
</dbReference>
<dbReference type="PRINTS" id="PR00298">
    <property type="entry name" value="CHAPERONIN60"/>
</dbReference>
<dbReference type="SUPFAM" id="SSF52029">
    <property type="entry name" value="GroEL apical domain-like"/>
    <property type="match status" value="1"/>
</dbReference>
<dbReference type="SUPFAM" id="SSF48592">
    <property type="entry name" value="GroEL equatorial domain-like"/>
    <property type="match status" value="1"/>
</dbReference>
<dbReference type="SUPFAM" id="SSF54849">
    <property type="entry name" value="GroEL-intermediate domain like"/>
    <property type="match status" value="1"/>
</dbReference>
<dbReference type="PROSITE" id="PS00296">
    <property type="entry name" value="CHAPERONINS_CPN60"/>
    <property type="match status" value="1"/>
</dbReference>
<sequence length="552" mass="58284">MAAKVLKFSHEVLHAMSRGVEVLANAVKVTLGPKGRNVVLDKSFGAPTITKDGVSVAKEIELEDKFENMGAQMVKEVASRTSDDAGDGTTTATVLAQAILVEGIKAVIAGMNPMDLKRGIDKAVTAAVAELKKISKPCKDQKAIAQVGTISANSDKSIGDIIAEAMEKVGKEGVITVEDGSGLENALEVVEGMQFDRGYLSPYFINNQQNMSAELENPFILLVDKKISNIRELIPLLENVAKSGRPLLVIAEDIEGEALATLVVNNIRGVVKVAAVKAPGFGDRRKAMLQDIAVLTGGKVISEEVGLSLEAASLDDLGSAKRVVVTKDDTTIIDGSGDAGDIKNRVEQIRKEIENSSSDYDKEKLQERLAKLAGGVAVIKVGAATEVEMKEKKARVEDALHATRAAVEEGVVPGGGVALIRVLKSLDSVEVENEDQRVGVEIARRAMAYPLSQIVKNTGVQAAVVADKVLNHKDVNYGYNAATGEYGDMIEMGILDPTKVTRTALQNAASIAGLMITTECMVTEAPKKKEESMPGGGDMGGMGGMGGMGGMM</sequence>
<accession>P19421</accession>
<feature type="chain" id="PRO_0000063354" description="Chaperonin GroEL">
    <location>
        <begin position="1"/>
        <end position="552"/>
    </location>
</feature>
<feature type="binding site" evidence="1">
    <location>
        <begin position="30"/>
        <end position="33"/>
    </location>
    <ligand>
        <name>ATP</name>
        <dbReference type="ChEBI" id="CHEBI:30616"/>
    </ligand>
</feature>
<feature type="binding site" evidence="1">
    <location>
        <position position="51"/>
    </location>
    <ligand>
        <name>ATP</name>
        <dbReference type="ChEBI" id="CHEBI:30616"/>
    </ligand>
</feature>
<feature type="binding site" evidence="1">
    <location>
        <begin position="87"/>
        <end position="91"/>
    </location>
    <ligand>
        <name>ATP</name>
        <dbReference type="ChEBI" id="CHEBI:30616"/>
    </ligand>
</feature>
<feature type="binding site" evidence="1">
    <location>
        <position position="415"/>
    </location>
    <ligand>
        <name>ATP</name>
        <dbReference type="ChEBI" id="CHEBI:30616"/>
    </ligand>
</feature>
<feature type="binding site" evidence="1">
    <location>
        <begin position="480"/>
        <end position="482"/>
    </location>
    <ligand>
        <name>ATP</name>
        <dbReference type="ChEBI" id="CHEBI:30616"/>
    </ligand>
</feature>
<feature type="binding site" evidence="1">
    <location>
        <position position="496"/>
    </location>
    <ligand>
        <name>ATP</name>
        <dbReference type="ChEBI" id="CHEBI:30616"/>
    </ligand>
</feature>
<gene>
    <name evidence="1" type="primary">groEL</name>
    <name evidence="1" type="synonym">groL</name>
    <name type="synonym">htpB</name>
    <name type="synonym">mopA</name>
    <name type="ordered locus">CBU_1718</name>
</gene>
<evidence type="ECO:0000255" key="1">
    <source>
        <dbReference type="HAMAP-Rule" id="MF_00600"/>
    </source>
</evidence>
<evidence type="ECO:0000269" key="2">
    <source>
    </source>
</evidence>
<proteinExistence type="evidence at protein level"/>
<comment type="function">
    <text evidence="1">Together with its co-chaperonin GroES, plays an essential role in assisting protein folding. The GroEL-GroES system forms a nano-cage that allows encapsulation of the non-native substrate proteins and provides a physical environment optimized to promote and accelerate protein folding.</text>
</comment>
<comment type="catalytic activity">
    <reaction evidence="1">
        <text>ATP + H2O + a folded polypeptide = ADP + phosphate + an unfolded polypeptide.</text>
        <dbReference type="EC" id="5.6.1.7"/>
    </reaction>
</comment>
<comment type="subunit">
    <text evidence="1">Forms a cylinder of 14 subunits composed of two heptameric rings stacked back-to-back. Interacts with the co-chaperonin GroES.</text>
</comment>
<comment type="subcellular location">
    <subcellularLocation>
        <location evidence="1">Cytoplasm</location>
    </subcellularLocation>
</comment>
<comment type="developmental stage">
    <text evidence="2">Present in large cell variant (LCV) stage and small cell variant (SCV) stage (at protein level). LCVs are more metabolically active than SCVs.</text>
</comment>
<comment type="similarity">
    <text evidence="1">Belongs to the chaperonin (HSP60) family.</text>
</comment>
<organism>
    <name type="scientific">Coxiella burnetii (strain RSA 493 / Nine Mile phase I)</name>
    <dbReference type="NCBI Taxonomy" id="227377"/>
    <lineage>
        <taxon>Bacteria</taxon>
        <taxon>Pseudomonadati</taxon>
        <taxon>Pseudomonadota</taxon>
        <taxon>Gammaproteobacteria</taxon>
        <taxon>Legionellales</taxon>
        <taxon>Coxiellaceae</taxon>
        <taxon>Coxiella</taxon>
    </lineage>
</organism>
<reference key="1">
    <citation type="journal article" date="1988" name="J. Bacteriol.">
        <title>A heat shock operon in Coxiella burnetti produces a major antigen homologous to a protein in both mycobacteria and Escherichia coli.</title>
        <authorList>
            <person name="Vodkin M.H."/>
            <person name="Williams J.C."/>
        </authorList>
    </citation>
    <scope>NUCLEOTIDE SEQUENCE [GENOMIC DNA]</scope>
</reference>
<reference key="2">
    <citation type="journal article" date="2003" name="Proc. Natl. Acad. Sci. U.S.A.">
        <title>Complete genome sequence of the Q-fever pathogen, Coxiella burnetii.</title>
        <authorList>
            <person name="Seshadri R."/>
            <person name="Paulsen I.T."/>
            <person name="Eisen J.A."/>
            <person name="Read T.D."/>
            <person name="Nelson K.E."/>
            <person name="Nelson W.C."/>
            <person name="Ward N.L."/>
            <person name="Tettelin H."/>
            <person name="Davidsen T.M."/>
            <person name="Beanan M.J."/>
            <person name="DeBoy R.T."/>
            <person name="Daugherty S.C."/>
            <person name="Brinkac L.M."/>
            <person name="Madupu R."/>
            <person name="Dodson R.J."/>
            <person name="Khouri H.M."/>
            <person name="Lee K.H."/>
            <person name="Carty H.A."/>
            <person name="Scanlan D."/>
            <person name="Heinzen R.A."/>
            <person name="Thompson H.A."/>
            <person name="Samuel J.E."/>
            <person name="Fraser C.M."/>
            <person name="Heidelberg J.F."/>
        </authorList>
    </citation>
    <scope>NUCLEOTIDE SEQUENCE [LARGE SCALE GENOMIC DNA]</scope>
    <source>
        <strain>RSA 493 / Nine Mile phase I</strain>
    </source>
</reference>
<reference key="3">
    <citation type="journal article" date="2007" name="Infect. Immun.">
        <title>Proteome and antigen profiling of Coxiella burnetii developmental forms.</title>
        <authorList>
            <person name="Coleman S.A."/>
            <person name="Fischer E.R."/>
            <person name="Cockrell D.C."/>
            <person name="Voth D.E."/>
            <person name="Howe D."/>
            <person name="Mead D.J."/>
            <person name="Samuel J.E."/>
            <person name="Heinzen R.A."/>
        </authorList>
    </citation>
    <scope>IDENTIFICATION BY MASS SPECTROMETRY</scope>
    <scope>DEVELOPMENTAL STAGE</scope>
    <source>
        <strain>Nine Mile Crazy / RSA 514</strain>
    </source>
</reference>
<keyword id="KW-0067">ATP-binding</keyword>
<keyword id="KW-0143">Chaperone</keyword>
<keyword id="KW-0963">Cytoplasm</keyword>
<keyword id="KW-0413">Isomerase</keyword>
<keyword id="KW-0547">Nucleotide-binding</keyword>
<keyword id="KW-1185">Reference proteome</keyword>
<keyword id="KW-0346">Stress response</keyword>
<protein>
    <recommendedName>
        <fullName evidence="1">Chaperonin GroEL</fullName>
        <ecNumber evidence="1">5.6.1.7</ecNumber>
    </recommendedName>
    <alternativeName>
        <fullName evidence="1">60 kDa chaperonin</fullName>
    </alternativeName>
    <alternativeName>
        <fullName evidence="1">Chaperonin-60</fullName>
        <shortName evidence="1">Cpn60</shortName>
    </alternativeName>
</protein>
<name>CH60_COXBU</name>